<protein>
    <recommendedName>
        <fullName evidence="1">Phosphonates import ATP-binding protein PhnC 1</fullName>
        <ecNumber evidence="1">7.3.2.2</ecNumber>
    </recommendedName>
</protein>
<proteinExistence type="inferred from homology"/>
<evidence type="ECO:0000255" key="1">
    <source>
        <dbReference type="HAMAP-Rule" id="MF_01713"/>
    </source>
</evidence>
<evidence type="ECO:0000305" key="2"/>
<keyword id="KW-0067">ATP-binding</keyword>
<keyword id="KW-0997">Cell inner membrane</keyword>
<keyword id="KW-1003">Cell membrane</keyword>
<keyword id="KW-0472">Membrane</keyword>
<keyword id="KW-0547">Nucleotide-binding</keyword>
<keyword id="KW-0918">Phosphonate transport</keyword>
<keyword id="KW-1185">Reference proteome</keyword>
<keyword id="KW-1278">Translocase</keyword>
<keyword id="KW-0813">Transport</keyword>
<dbReference type="EC" id="7.3.2.2" evidence="1"/>
<dbReference type="EMBL" id="CP000352">
    <property type="protein sequence ID" value="ABF07661.1"/>
    <property type="status" value="ALT_INIT"/>
    <property type="molecule type" value="Genomic_DNA"/>
</dbReference>
<dbReference type="SMR" id="Q1LQB5"/>
<dbReference type="STRING" id="266264.Rmet_0775"/>
<dbReference type="KEGG" id="rme:Rmet_0775"/>
<dbReference type="eggNOG" id="COG3638">
    <property type="taxonomic scope" value="Bacteria"/>
</dbReference>
<dbReference type="HOGENOM" id="CLU_000604_1_22_4"/>
<dbReference type="Proteomes" id="UP000002429">
    <property type="component" value="Chromosome"/>
</dbReference>
<dbReference type="GO" id="GO:0005886">
    <property type="term" value="C:plasma membrane"/>
    <property type="evidence" value="ECO:0007669"/>
    <property type="project" value="UniProtKB-SubCell"/>
</dbReference>
<dbReference type="GO" id="GO:0015416">
    <property type="term" value="F:ABC-type phosphonate transporter activity"/>
    <property type="evidence" value="ECO:0007669"/>
    <property type="project" value="UniProtKB-EC"/>
</dbReference>
<dbReference type="GO" id="GO:0005524">
    <property type="term" value="F:ATP binding"/>
    <property type="evidence" value="ECO:0007669"/>
    <property type="project" value="UniProtKB-KW"/>
</dbReference>
<dbReference type="GO" id="GO:0016887">
    <property type="term" value="F:ATP hydrolysis activity"/>
    <property type="evidence" value="ECO:0007669"/>
    <property type="project" value="InterPro"/>
</dbReference>
<dbReference type="CDD" id="cd03256">
    <property type="entry name" value="ABC_PhnC_transporter"/>
    <property type="match status" value="1"/>
</dbReference>
<dbReference type="Gene3D" id="3.40.50.300">
    <property type="entry name" value="P-loop containing nucleotide triphosphate hydrolases"/>
    <property type="match status" value="1"/>
</dbReference>
<dbReference type="InterPro" id="IPR003593">
    <property type="entry name" value="AAA+_ATPase"/>
</dbReference>
<dbReference type="InterPro" id="IPR003439">
    <property type="entry name" value="ABC_transporter-like_ATP-bd"/>
</dbReference>
<dbReference type="InterPro" id="IPR017871">
    <property type="entry name" value="ABC_transporter-like_CS"/>
</dbReference>
<dbReference type="InterPro" id="IPR012693">
    <property type="entry name" value="ABC_transpr_PhnC"/>
</dbReference>
<dbReference type="InterPro" id="IPR050086">
    <property type="entry name" value="MetN_ABC_transporter-like"/>
</dbReference>
<dbReference type="InterPro" id="IPR027417">
    <property type="entry name" value="P-loop_NTPase"/>
</dbReference>
<dbReference type="NCBIfam" id="TIGR02315">
    <property type="entry name" value="ABC_phnC"/>
    <property type="match status" value="1"/>
</dbReference>
<dbReference type="PANTHER" id="PTHR43166">
    <property type="entry name" value="AMINO ACID IMPORT ATP-BINDING PROTEIN"/>
    <property type="match status" value="1"/>
</dbReference>
<dbReference type="PANTHER" id="PTHR43166:SF6">
    <property type="entry name" value="PHOSPHONATES IMPORT ATP-BINDING PROTEIN PHNC"/>
    <property type="match status" value="1"/>
</dbReference>
<dbReference type="Pfam" id="PF00005">
    <property type="entry name" value="ABC_tran"/>
    <property type="match status" value="1"/>
</dbReference>
<dbReference type="SMART" id="SM00382">
    <property type="entry name" value="AAA"/>
    <property type="match status" value="1"/>
</dbReference>
<dbReference type="SUPFAM" id="SSF52540">
    <property type="entry name" value="P-loop containing nucleoside triphosphate hydrolases"/>
    <property type="match status" value="1"/>
</dbReference>
<dbReference type="PROSITE" id="PS00211">
    <property type="entry name" value="ABC_TRANSPORTER_1"/>
    <property type="match status" value="1"/>
</dbReference>
<dbReference type="PROSITE" id="PS50893">
    <property type="entry name" value="ABC_TRANSPORTER_2"/>
    <property type="match status" value="1"/>
</dbReference>
<dbReference type="PROSITE" id="PS51249">
    <property type="entry name" value="PHNC"/>
    <property type="match status" value="1"/>
</dbReference>
<sequence>MTHAIEVRGLSKSFRADRKALDDVTLQIAPGEMVALLGASGSGKSTLLRHVAGFVTGDAGSGEILVNGRTVQRNGRLARDVRRVRADIGFVFQQFNLVGRLPVITNVLVGMLTRVPKWRSLLRIFKASEVQAGLDALAQVGIDDYAFQRASTLSGGQQQRAAIARTLVQNAQVILADEPIASLDPESSRRVMSQLAQINRTRKVAVVVSLHQVDVAMRYCPRVVALRHGKVVYDGPSAALTQQMLRDLYGSEADELLHDSVPEAPSCAEGVPAPVMVRMDLAAA</sequence>
<comment type="function">
    <text evidence="1">Part of the ABC transporter complex PhnCDE involved in phosphonates import. Responsible for energy coupling to the transport system.</text>
</comment>
<comment type="catalytic activity">
    <reaction evidence="1">
        <text>phosphonate(out) + ATP + H2O = phosphonate(in) + ADP + phosphate + H(+)</text>
        <dbReference type="Rhea" id="RHEA:18065"/>
        <dbReference type="ChEBI" id="CHEBI:15377"/>
        <dbReference type="ChEBI" id="CHEBI:15378"/>
        <dbReference type="ChEBI" id="CHEBI:16215"/>
        <dbReference type="ChEBI" id="CHEBI:30616"/>
        <dbReference type="ChEBI" id="CHEBI:43474"/>
        <dbReference type="ChEBI" id="CHEBI:456216"/>
        <dbReference type="EC" id="7.3.2.2"/>
    </reaction>
</comment>
<comment type="subunit">
    <text evidence="1">The complex is composed of two ATP-binding proteins (PhnC), two transmembrane proteins (PhnE) and a solute-binding protein (PhnD).</text>
</comment>
<comment type="subcellular location">
    <subcellularLocation>
        <location evidence="1">Cell inner membrane</location>
        <topology evidence="1">Peripheral membrane protein</topology>
    </subcellularLocation>
</comment>
<comment type="similarity">
    <text evidence="1">Belongs to the ABC transporter superfamily. Phosphonates importer (TC 3.A.1.9.1) family.</text>
</comment>
<comment type="sequence caution" evidence="2">
    <conflict type="erroneous initiation">
        <sequence resource="EMBL-CDS" id="ABF07661"/>
    </conflict>
</comment>
<reference key="1">
    <citation type="journal article" date="2010" name="PLoS ONE">
        <title>The complete genome sequence of Cupriavidus metallidurans strain CH34, a master survivalist in harsh and anthropogenic environments.</title>
        <authorList>
            <person name="Janssen P.J."/>
            <person name="Van Houdt R."/>
            <person name="Moors H."/>
            <person name="Monsieurs P."/>
            <person name="Morin N."/>
            <person name="Michaux A."/>
            <person name="Benotmane M.A."/>
            <person name="Leys N."/>
            <person name="Vallaeys T."/>
            <person name="Lapidus A."/>
            <person name="Monchy S."/>
            <person name="Medigue C."/>
            <person name="Taghavi S."/>
            <person name="McCorkle S."/>
            <person name="Dunn J."/>
            <person name="van der Lelie D."/>
            <person name="Mergeay M."/>
        </authorList>
    </citation>
    <scope>NUCLEOTIDE SEQUENCE [LARGE SCALE GENOMIC DNA]</scope>
    <source>
        <strain>ATCC 43123 / DSM 2839 / NBRC 102507 / CH34</strain>
    </source>
</reference>
<accession>Q1LQB5</accession>
<organism>
    <name type="scientific">Cupriavidus metallidurans (strain ATCC 43123 / DSM 2839 / NBRC 102507 / CH34)</name>
    <name type="common">Ralstonia metallidurans</name>
    <dbReference type="NCBI Taxonomy" id="266264"/>
    <lineage>
        <taxon>Bacteria</taxon>
        <taxon>Pseudomonadati</taxon>
        <taxon>Pseudomonadota</taxon>
        <taxon>Betaproteobacteria</taxon>
        <taxon>Burkholderiales</taxon>
        <taxon>Burkholderiaceae</taxon>
        <taxon>Cupriavidus</taxon>
    </lineage>
</organism>
<name>PHNC1_CUPMC</name>
<feature type="chain" id="PRO_0000274735" description="Phosphonates import ATP-binding protein PhnC 1">
    <location>
        <begin position="1"/>
        <end position="284"/>
    </location>
</feature>
<feature type="domain" description="ABC transporter" evidence="1">
    <location>
        <begin position="5"/>
        <end position="253"/>
    </location>
</feature>
<feature type="binding site" evidence="1">
    <location>
        <begin position="38"/>
        <end position="45"/>
    </location>
    <ligand>
        <name>ATP</name>
        <dbReference type="ChEBI" id="CHEBI:30616"/>
    </ligand>
</feature>
<gene>
    <name evidence="1" type="primary">phnC1</name>
    <name type="ordered locus">Rmet_0775</name>
</gene>